<keyword id="KW-1185">Reference proteome</keyword>
<feature type="chain" id="PRO_0000222981" description="Uncharacterized 6.2 kDa protein">
    <location>
        <begin position="1"/>
        <end position="51"/>
    </location>
</feature>
<organism>
    <name type="scientific">Thermoproteus tenax virus 1 (strain KRA1)</name>
    <name type="common">TTV1</name>
    <dbReference type="NCBI Taxonomy" id="10480"/>
    <lineage>
        <taxon>Viruses</taxon>
        <taxon>Adnaviria</taxon>
        <taxon>Zilligvirae</taxon>
        <taxon>Taleaviricota</taxon>
        <taxon>Tokiviricetes</taxon>
        <taxon>Primavirales</taxon>
        <taxon>Tristromaviridae</taxon>
        <taxon>Betatristromavirus</taxon>
        <taxon>Betatristromavirus TTV1</taxon>
    </lineage>
</organism>
<reference key="1">
    <citation type="submission" date="1989-03" db="EMBL/GenBank/DDBJ databases">
        <authorList>
            <person name="Neumann H."/>
        </authorList>
    </citation>
    <scope>NUCLEOTIDE SEQUENCE [GENOMIC DNA]</scope>
</reference>
<organismHost>
    <name type="scientific">Thermoproteus tenax</name>
    <dbReference type="NCBI Taxonomy" id="2271"/>
</organismHost>
<sequence length="51" mass="6171">MVLNEIHIYQLYLLSQLFNKYRYLCFTVFYSFSSSSTHRYPTLPPHHLLST</sequence>
<proteinExistence type="predicted"/>
<accession>P19299</accession>
<name>YORO_TTV1K</name>
<protein>
    <recommendedName>
        <fullName>Uncharacterized 6.2 kDa protein</fullName>
    </recommendedName>
</protein>
<dbReference type="EMBL" id="X14855">
    <property type="protein sequence ID" value="CAA32995.1"/>
    <property type="molecule type" value="Genomic_DNA"/>
</dbReference>
<dbReference type="Proteomes" id="UP000009250">
    <property type="component" value="Genome"/>
</dbReference>